<feature type="chain" id="PRO_0000301086" description="Peptide deformylase">
    <location>
        <begin position="1"/>
        <end position="175"/>
    </location>
</feature>
<feature type="active site" evidence="1">
    <location>
        <position position="139"/>
    </location>
</feature>
<feature type="binding site" evidence="1">
    <location>
        <position position="96"/>
    </location>
    <ligand>
        <name>Fe cation</name>
        <dbReference type="ChEBI" id="CHEBI:24875"/>
    </ligand>
</feature>
<feature type="binding site" evidence="1">
    <location>
        <position position="138"/>
    </location>
    <ligand>
        <name>Fe cation</name>
        <dbReference type="ChEBI" id="CHEBI:24875"/>
    </ligand>
</feature>
<feature type="binding site" evidence="1">
    <location>
        <position position="142"/>
    </location>
    <ligand>
        <name>Fe cation</name>
        <dbReference type="ChEBI" id="CHEBI:24875"/>
    </ligand>
</feature>
<accession>Q6NC51</accession>
<keyword id="KW-0378">Hydrolase</keyword>
<keyword id="KW-0408">Iron</keyword>
<keyword id="KW-0479">Metal-binding</keyword>
<keyword id="KW-0648">Protein biosynthesis</keyword>
<evidence type="ECO:0000255" key="1">
    <source>
        <dbReference type="HAMAP-Rule" id="MF_00163"/>
    </source>
</evidence>
<dbReference type="EC" id="3.5.1.88" evidence="1"/>
<dbReference type="EMBL" id="BX572594">
    <property type="protein sequence ID" value="CAE26065.1"/>
    <property type="molecule type" value="Genomic_DNA"/>
</dbReference>
<dbReference type="RefSeq" id="WP_011156189.1">
    <property type="nucleotide sequence ID" value="NZ_CP116810.1"/>
</dbReference>
<dbReference type="SMR" id="Q6NC51"/>
<dbReference type="STRING" id="258594.RPA0621"/>
<dbReference type="GeneID" id="66891642"/>
<dbReference type="eggNOG" id="COG0242">
    <property type="taxonomic scope" value="Bacteria"/>
</dbReference>
<dbReference type="HOGENOM" id="CLU_061901_2_0_5"/>
<dbReference type="PhylomeDB" id="Q6NC51"/>
<dbReference type="GO" id="GO:0046872">
    <property type="term" value="F:metal ion binding"/>
    <property type="evidence" value="ECO:0007669"/>
    <property type="project" value="UniProtKB-KW"/>
</dbReference>
<dbReference type="GO" id="GO:0042586">
    <property type="term" value="F:peptide deformylase activity"/>
    <property type="evidence" value="ECO:0007669"/>
    <property type="project" value="UniProtKB-UniRule"/>
</dbReference>
<dbReference type="GO" id="GO:0043686">
    <property type="term" value="P:co-translational protein modification"/>
    <property type="evidence" value="ECO:0007669"/>
    <property type="project" value="TreeGrafter"/>
</dbReference>
<dbReference type="GO" id="GO:0006412">
    <property type="term" value="P:translation"/>
    <property type="evidence" value="ECO:0007669"/>
    <property type="project" value="UniProtKB-UniRule"/>
</dbReference>
<dbReference type="CDD" id="cd00487">
    <property type="entry name" value="Pep_deformylase"/>
    <property type="match status" value="1"/>
</dbReference>
<dbReference type="Gene3D" id="3.90.45.10">
    <property type="entry name" value="Peptide deformylase"/>
    <property type="match status" value="1"/>
</dbReference>
<dbReference type="HAMAP" id="MF_00163">
    <property type="entry name" value="Pep_deformylase"/>
    <property type="match status" value="1"/>
</dbReference>
<dbReference type="InterPro" id="IPR023635">
    <property type="entry name" value="Peptide_deformylase"/>
</dbReference>
<dbReference type="InterPro" id="IPR036821">
    <property type="entry name" value="Peptide_deformylase_sf"/>
</dbReference>
<dbReference type="NCBIfam" id="TIGR00079">
    <property type="entry name" value="pept_deformyl"/>
    <property type="match status" value="1"/>
</dbReference>
<dbReference type="NCBIfam" id="NF001159">
    <property type="entry name" value="PRK00150.1-3"/>
    <property type="match status" value="1"/>
</dbReference>
<dbReference type="PANTHER" id="PTHR10458">
    <property type="entry name" value="PEPTIDE DEFORMYLASE"/>
    <property type="match status" value="1"/>
</dbReference>
<dbReference type="PANTHER" id="PTHR10458:SF22">
    <property type="entry name" value="PEPTIDE DEFORMYLASE"/>
    <property type="match status" value="1"/>
</dbReference>
<dbReference type="Pfam" id="PF01327">
    <property type="entry name" value="Pep_deformylase"/>
    <property type="match status" value="1"/>
</dbReference>
<dbReference type="PIRSF" id="PIRSF004749">
    <property type="entry name" value="Pep_def"/>
    <property type="match status" value="1"/>
</dbReference>
<dbReference type="PRINTS" id="PR01576">
    <property type="entry name" value="PDEFORMYLASE"/>
</dbReference>
<dbReference type="SUPFAM" id="SSF56420">
    <property type="entry name" value="Peptide deformylase"/>
    <property type="match status" value="1"/>
</dbReference>
<proteinExistence type="inferred from homology"/>
<name>DEF_RHOPA</name>
<organism>
    <name type="scientific">Rhodopseudomonas palustris (strain ATCC BAA-98 / CGA009)</name>
    <dbReference type="NCBI Taxonomy" id="258594"/>
    <lineage>
        <taxon>Bacteria</taxon>
        <taxon>Pseudomonadati</taxon>
        <taxon>Pseudomonadota</taxon>
        <taxon>Alphaproteobacteria</taxon>
        <taxon>Hyphomicrobiales</taxon>
        <taxon>Nitrobacteraceae</taxon>
        <taxon>Rhodopseudomonas</taxon>
    </lineage>
</organism>
<reference key="1">
    <citation type="journal article" date="2004" name="Nat. Biotechnol.">
        <title>Complete genome sequence of the metabolically versatile photosynthetic bacterium Rhodopseudomonas palustris.</title>
        <authorList>
            <person name="Larimer F.W."/>
            <person name="Chain P."/>
            <person name="Hauser L."/>
            <person name="Lamerdin J.E."/>
            <person name="Malfatti S."/>
            <person name="Do L."/>
            <person name="Land M.L."/>
            <person name="Pelletier D.A."/>
            <person name="Beatty J.T."/>
            <person name="Lang A.S."/>
            <person name="Tabita F.R."/>
            <person name="Gibson J.L."/>
            <person name="Hanson T.E."/>
            <person name="Bobst C."/>
            <person name="Torres y Torres J.L."/>
            <person name="Peres C."/>
            <person name="Harrison F.H."/>
            <person name="Gibson J."/>
            <person name="Harwood C.S."/>
        </authorList>
    </citation>
    <scope>NUCLEOTIDE SEQUENCE [LARGE SCALE GENOMIC DNA]</scope>
    <source>
        <strain>ATCC BAA-98 / CGA009</strain>
    </source>
</reference>
<protein>
    <recommendedName>
        <fullName evidence="1">Peptide deformylase</fullName>
        <shortName evidence="1">PDF</shortName>
        <ecNumber evidence="1">3.5.1.88</ecNumber>
    </recommendedName>
    <alternativeName>
        <fullName evidence="1">Polypeptide deformylase</fullName>
    </alternativeName>
</protein>
<gene>
    <name evidence="1" type="primary">def</name>
    <name type="ordered locus">RPA0621</name>
</gene>
<comment type="function">
    <text evidence="1">Removes the formyl group from the N-terminal Met of newly synthesized proteins. Requires at least a dipeptide for an efficient rate of reaction. N-terminal L-methionine is a prerequisite for activity but the enzyme has broad specificity at other positions.</text>
</comment>
<comment type="catalytic activity">
    <reaction evidence="1">
        <text>N-terminal N-formyl-L-methionyl-[peptide] + H2O = N-terminal L-methionyl-[peptide] + formate</text>
        <dbReference type="Rhea" id="RHEA:24420"/>
        <dbReference type="Rhea" id="RHEA-COMP:10639"/>
        <dbReference type="Rhea" id="RHEA-COMP:10640"/>
        <dbReference type="ChEBI" id="CHEBI:15377"/>
        <dbReference type="ChEBI" id="CHEBI:15740"/>
        <dbReference type="ChEBI" id="CHEBI:49298"/>
        <dbReference type="ChEBI" id="CHEBI:64731"/>
        <dbReference type="EC" id="3.5.1.88"/>
    </reaction>
</comment>
<comment type="cofactor">
    <cofactor evidence="1">
        <name>Fe(2+)</name>
        <dbReference type="ChEBI" id="CHEBI:29033"/>
    </cofactor>
    <text evidence="1">Binds 1 Fe(2+) ion.</text>
</comment>
<comment type="similarity">
    <text evidence="1">Belongs to the polypeptide deformylase family.</text>
</comment>
<sequence length="175" mass="19838">MALREIIILPDKRLREISKPVTEVTTEIRKLADDMFESMYEAPGIGLAAIQIAEPVRLITMDIVRKEGDGKSDPRAFINPEIVGASSEMNVYEEGCLSIPEYYAEVERPKTVRIRYTDLDGNVKEEDADGLFATCIQHEIDHLNGVLFVDHLSKLKRAMVIRKFEKAAKRGIKYV</sequence>